<name>ENO_PARDP</name>
<keyword id="KW-0963">Cytoplasm</keyword>
<keyword id="KW-0324">Glycolysis</keyword>
<keyword id="KW-0456">Lyase</keyword>
<keyword id="KW-0460">Magnesium</keyword>
<keyword id="KW-0479">Metal-binding</keyword>
<keyword id="KW-1185">Reference proteome</keyword>
<keyword id="KW-0964">Secreted</keyword>
<sequence>MTAIIDIFAREILDSRGNPTVEVDVTLEDGTMGRAAVPSGASTGAHEAVEKRDGDKARYLGKGVLEAVAAVNGEIAENLIGEDATEQVAIDRMMIELDGTPNKGRLGANAILGVSLAVAKAAAEACSQPLYRYVGGAGARVLPVPMMNIINGGEHADNPIDIQEFMIMPVAAENIREAVRMGSEVFHTLKKELSSAGLATGVGDEGGFAPNLSSTRDALDFILKAIEKAGYQPGDDIMLALDCASTEYFKGGKYEMAGEGKSLSPAENVAYLEALCNDYPILSIEDGCAEDDWDGWKLLTDTLGGRVQLVGDDLFVTNPARLAEGIAKGCGNSLLVKVNQIGTLTETLDAVRMADRARYTSVMSHRSGETEDATIADLAVATNCGQIKTGSLARSDRLAKYNQLIRIEEMLGATAEYAGKSILRG</sequence>
<gene>
    <name evidence="1" type="primary">eno</name>
    <name type="ordered locus">Pden_4060</name>
</gene>
<reference key="1">
    <citation type="submission" date="2006-12" db="EMBL/GenBank/DDBJ databases">
        <title>Complete sequence of chromosome 2 of Paracoccus denitrificans PD1222.</title>
        <authorList>
            <person name="Copeland A."/>
            <person name="Lucas S."/>
            <person name="Lapidus A."/>
            <person name="Barry K."/>
            <person name="Detter J.C."/>
            <person name="Glavina del Rio T."/>
            <person name="Hammon N."/>
            <person name="Israni S."/>
            <person name="Dalin E."/>
            <person name="Tice H."/>
            <person name="Pitluck S."/>
            <person name="Munk A.C."/>
            <person name="Brettin T."/>
            <person name="Bruce D."/>
            <person name="Han C."/>
            <person name="Tapia R."/>
            <person name="Gilna P."/>
            <person name="Schmutz J."/>
            <person name="Larimer F."/>
            <person name="Land M."/>
            <person name="Hauser L."/>
            <person name="Kyrpides N."/>
            <person name="Lykidis A."/>
            <person name="Spiro S."/>
            <person name="Richardson D.J."/>
            <person name="Moir J.W.B."/>
            <person name="Ferguson S.J."/>
            <person name="van Spanning R.J.M."/>
            <person name="Richardson P."/>
        </authorList>
    </citation>
    <scope>NUCLEOTIDE SEQUENCE [LARGE SCALE GENOMIC DNA]</scope>
    <source>
        <strain>Pd 1222</strain>
    </source>
</reference>
<feature type="chain" id="PRO_0000280869" description="Enolase">
    <location>
        <begin position="1"/>
        <end position="425"/>
    </location>
</feature>
<feature type="active site" description="Proton donor" evidence="1">
    <location>
        <position position="205"/>
    </location>
</feature>
<feature type="active site" description="Proton acceptor" evidence="1">
    <location>
        <position position="337"/>
    </location>
</feature>
<feature type="binding site" evidence="1">
    <location>
        <position position="163"/>
    </location>
    <ligand>
        <name>(2R)-2-phosphoglycerate</name>
        <dbReference type="ChEBI" id="CHEBI:58289"/>
    </ligand>
</feature>
<feature type="binding site" evidence="1">
    <location>
        <position position="242"/>
    </location>
    <ligand>
        <name>Mg(2+)</name>
        <dbReference type="ChEBI" id="CHEBI:18420"/>
    </ligand>
</feature>
<feature type="binding site" evidence="1">
    <location>
        <position position="285"/>
    </location>
    <ligand>
        <name>Mg(2+)</name>
        <dbReference type="ChEBI" id="CHEBI:18420"/>
    </ligand>
</feature>
<feature type="binding site" evidence="1">
    <location>
        <position position="312"/>
    </location>
    <ligand>
        <name>Mg(2+)</name>
        <dbReference type="ChEBI" id="CHEBI:18420"/>
    </ligand>
</feature>
<feature type="binding site" evidence="1">
    <location>
        <position position="337"/>
    </location>
    <ligand>
        <name>(2R)-2-phosphoglycerate</name>
        <dbReference type="ChEBI" id="CHEBI:58289"/>
    </ligand>
</feature>
<feature type="binding site" evidence="1">
    <location>
        <position position="366"/>
    </location>
    <ligand>
        <name>(2R)-2-phosphoglycerate</name>
        <dbReference type="ChEBI" id="CHEBI:58289"/>
    </ligand>
</feature>
<feature type="binding site" evidence="1">
    <location>
        <position position="367"/>
    </location>
    <ligand>
        <name>(2R)-2-phosphoglycerate</name>
        <dbReference type="ChEBI" id="CHEBI:58289"/>
    </ligand>
</feature>
<feature type="binding site" evidence="1">
    <location>
        <position position="388"/>
    </location>
    <ligand>
        <name>(2R)-2-phosphoglycerate</name>
        <dbReference type="ChEBI" id="CHEBI:58289"/>
    </ligand>
</feature>
<proteinExistence type="inferred from homology"/>
<protein>
    <recommendedName>
        <fullName evidence="1">Enolase</fullName>
        <ecNumber evidence="1">4.2.1.11</ecNumber>
    </recommendedName>
    <alternativeName>
        <fullName evidence="1">2-phospho-D-glycerate hydro-lyase</fullName>
    </alternativeName>
    <alternativeName>
        <fullName evidence="1">2-phosphoglycerate dehydratase</fullName>
    </alternativeName>
</protein>
<comment type="function">
    <text evidence="1">Catalyzes the reversible conversion of 2-phosphoglycerate (2-PG) into phosphoenolpyruvate (PEP). It is essential for the degradation of carbohydrates via glycolysis.</text>
</comment>
<comment type="catalytic activity">
    <reaction evidence="1">
        <text>(2R)-2-phosphoglycerate = phosphoenolpyruvate + H2O</text>
        <dbReference type="Rhea" id="RHEA:10164"/>
        <dbReference type="ChEBI" id="CHEBI:15377"/>
        <dbReference type="ChEBI" id="CHEBI:58289"/>
        <dbReference type="ChEBI" id="CHEBI:58702"/>
        <dbReference type="EC" id="4.2.1.11"/>
    </reaction>
</comment>
<comment type="cofactor">
    <cofactor evidence="1">
        <name>Mg(2+)</name>
        <dbReference type="ChEBI" id="CHEBI:18420"/>
    </cofactor>
    <text evidence="1">Binds a second Mg(2+) ion via substrate during catalysis.</text>
</comment>
<comment type="pathway">
    <text evidence="1">Carbohydrate degradation; glycolysis; pyruvate from D-glyceraldehyde 3-phosphate: step 4/5.</text>
</comment>
<comment type="subcellular location">
    <subcellularLocation>
        <location evidence="1">Cytoplasm</location>
    </subcellularLocation>
    <subcellularLocation>
        <location evidence="1">Secreted</location>
    </subcellularLocation>
    <subcellularLocation>
        <location evidence="1">Cell surface</location>
    </subcellularLocation>
    <text evidence="1">Fractions of enolase are present in both the cytoplasm and on the cell surface.</text>
</comment>
<comment type="similarity">
    <text evidence="1">Belongs to the enolase family.</text>
</comment>
<accession>A1B9D2</accession>
<dbReference type="EC" id="4.2.1.11" evidence="1"/>
<dbReference type="EMBL" id="CP000490">
    <property type="protein sequence ID" value="ABL72126.1"/>
    <property type="molecule type" value="Genomic_DNA"/>
</dbReference>
<dbReference type="RefSeq" id="WP_011750294.1">
    <property type="nucleotide sequence ID" value="NC_008687.1"/>
</dbReference>
<dbReference type="SMR" id="A1B9D2"/>
<dbReference type="STRING" id="318586.Pden_4060"/>
<dbReference type="EnsemblBacteria" id="ABL72126">
    <property type="protein sequence ID" value="ABL72126"/>
    <property type="gene ID" value="Pden_4060"/>
</dbReference>
<dbReference type="GeneID" id="93453724"/>
<dbReference type="KEGG" id="pde:Pden_4060"/>
<dbReference type="eggNOG" id="COG0148">
    <property type="taxonomic scope" value="Bacteria"/>
</dbReference>
<dbReference type="HOGENOM" id="CLU_031223_2_1_5"/>
<dbReference type="OrthoDB" id="9804716at2"/>
<dbReference type="UniPathway" id="UPA00109">
    <property type="reaction ID" value="UER00187"/>
</dbReference>
<dbReference type="Proteomes" id="UP000000361">
    <property type="component" value="Chromosome 2"/>
</dbReference>
<dbReference type="GO" id="GO:0009986">
    <property type="term" value="C:cell surface"/>
    <property type="evidence" value="ECO:0007669"/>
    <property type="project" value="UniProtKB-SubCell"/>
</dbReference>
<dbReference type="GO" id="GO:0005576">
    <property type="term" value="C:extracellular region"/>
    <property type="evidence" value="ECO:0007669"/>
    <property type="project" value="UniProtKB-SubCell"/>
</dbReference>
<dbReference type="GO" id="GO:0000015">
    <property type="term" value="C:phosphopyruvate hydratase complex"/>
    <property type="evidence" value="ECO:0007669"/>
    <property type="project" value="InterPro"/>
</dbReference>
<dbReference type="GO" id="GO:0000287">
    <property type="term" value="F:magnesium ion binding"/>
    <property type="evidence" value="ECO:0007669"/>
    <property type="project" value="UniProtKB-UniRule"/>
</dbReference>
<dbReference type="GO" id="GO:0004634">
    <property type="term" value="F:phosphopyruvate hydratase activity"/>
    <property type="evidence" value="ECO:0007669"/>
    <property type="project" value="UniProtKB-UniRule"/>
</dbReference>
<dbReference type="GO" id="GO:0006096">
    <property type="term" value="P:glycolytic process"/>
    <property type="evidence" value="ECO:0007669"/>
    <property type="project" value="UniProtKB-UniRule"/>
</dbReference>
<dbReference type="CDD" id="cd03313">
    <property type="entry name" value="enolase"/>
    <property type="match status" value="1"/>
</dbReference>
<dbReference type="FunFam" id="3.20.20.120:FF:000001">
    <property type="entry name" value="Enolase"/>
    <property type="match status" value="1"/>
</dbReference>
<dbReference type="FunFam" id="3.30.390.10:FF:000001">
    <property type="entry name" value="Enolase"/>
    <property type="match status" value="1"/>
</dbReference>
<dbReference type="Gene3D" id="3.20.20.120">
    <property type="entry name" value="Enolase-like C-terminal domain"/>
    <property type="match status" value="1"/>
</dbReference>
<dbReference type="Gene3D" id="3.30.390.10">
    <property type="entry name" value="Enolase-like, N-terminal domain"/>
    <property type="match status" value="1"/>
</dbReference>
<dbReference type="HAMAP" id="MF_00318">
    <property type="entry name" value="Enolase"/>
    <property type="match status" value="1"/>
</dbReference>
<dbReference type="InterPro" id="IPR000941">
    <property type="entry name" value="Enolase"/>
</dbReference>
<dbReference type="InterPro" id="IPR036849">
    <property type="entry name" value="Enolase-like_C_sf"/>
</dbReference>
<dbReference type="InterPro" id="IPR029017">
    <property type="entry name" value="Enolase-like_N"/>
</dbReference>
<dbReference type="InterPro" id="IPR020810">
    <property type="entry name" value="Enolase_C"/>
</dbReference>
<dbReference type="InterPro" id="IPR020809">
    <property type="entry name" value="Enolase_CS"/>
</dbReference>
<dbReference type="InterPro" id="IPR020811">
    <property type="entry name" value="Enolase_N"/>
</dbReference>
<dbReference type="NCBIfam" id="TIGR01060">
    <property type="entry name" value="eno"/>
    <property type="match status" value="1"/>
</dbReference>
<dbReference type="PANTHER" id="PTHR11902">
    <property type="entry name" value="ENOLASE"/>
    <property type="match status" value="1"/>
</dbReference>
<dbReference type="PANTHER" id="PTHR11902:SF1">
    <property type="entry name" value="ENOLASE"/>
    <property type="match status" value="1"/>
</dbReference>
<dbReference type="Pfam" id="PF00113">
    <property type="entry name" value="Enolase_C"/>
    <property type="match status" value="1"/>
</dbReference>
<dbReference type="Pfam" id="PF03952">
    <property type="entry name" value="Enolase_N"/>
    <property type="match status" value="1"/>
</dbReference>
<dbReference type="PIRSF" id="PIRSF001400">
    <property type="entry name" value="Enolase"/>
    <property type="match status" value="1"/>
</dbReference>
<dbReference type="PRINTS" id="PR00148">
    <property type="entry name" value="ENOLASE"/>
</dbReference>
<dbReference type="SFLD" id="SFLDS00001">
    <property type="entry name" value="Enolase"/>
    <property type="match status" value="1"/>
</dbReference>
<dbReference type="SFLD" id="SFLDF00002">
    <property type="entry name" value="enolase"/>
    <property type="match status" value="1"/>
</dbReference>
<dbReference type="SMART" id="SM01192">
    <property type="entry name" value="Enolase_C"/>
    <property type="match status" value="1"/>
</dbReference>
<dbReference type="SMART" id="SM01193">
    <property type="entry name" value="Enolase_N"/>
    <property type="match status" value="1"/>
</dbReference>
<dbReference type="SUPFAM" id="SSF51604">
    <property type="entry name" value="Enolase C-terminal domain-like"/>
    <property type="match status" value="1"/>
</dbReference>
<dbReference type="SUPFAM" id="SSF54826">
    <property type="entry name" value="Enolase N-terminal domain-like"/>
    <property type="match status" value="1"/>
</dbReference>
<dbReference type="PROSITE" id="PS00164">
    <property type="entry name" value="ENOLASE"/>
    <property type="match status" value="1"/>
</dbReference>
<evidence type="ECO:0000255" key="1">
    <source>
        <dbReference type="HAMAP-Rule" id="MF_00318"/>
    </source>
</evidence>
<organism>
    <name type="scientific">Paracoccus denitrificans (strain Pd 1222)</name>
    <dbReference type="NCBI Taxonomy" id="318586"/>
    <lineage>
        <taxon>Bacteria</taxon>
        <taxon>Pseudomonadati</taxon>
        <taxon>Pseudomonadota</taxon>
        <taxon>Alphaproteobacteria</taxon>
        <taxon>Rhodobacterales</taxon>
        <taxon>Paracoccaceae</taxon>
        <taxon>Paracoccus</taxon>
    </lineage>
</organism>